<keyword id="KW-0472">Membrane</keyword>
<keyword id="KW-1185">Reference proteome</keyword>
<keyword id="KW-0812">Transmembrane</keyword>
<keyword id="KW-1133">Transmembrane helix</keyword>
<feature type="chain" id="PRO_0000203299" description="Defect at low temperature protein 1">
    <location>
        <begin position="1"/>
        <end position="342"/>
    </location>
</feature>
<feature type="topological domain" description="Cytoplasmic" evidence="1">
    <location>
        <begin position="1"/>
        <end position="15"/>
    </location>
</feature>
<feature type="transmembrane region" description="Helical" evidence="1">
    <location>
        <begin position="16"/>
        <end position="36"/>
    </location>
</feature>
<feature type="topological domain" description="Extracellular" evidence="1">
    <location>
        <begin position="37"/>
        <end position="47"/>
    </location>
</feature>
<feature type="transmembrane region" description="Helical" evidence="1">
    <location>
        <begin position="48"/>
        <end position="68"/>
    </location>
</feature>
<feature type="topological domain" description="Cytoplasmic" evidence="1">
    <location>
        <begin position="69"/>
        <end position="342"/>
    </location>
</feature>
<organism>
    <name type="scientific">Saccharomyces cerevisiae (strain ATCC 204508 / S288c)</name>
    <name type="common">Baker's yeast</name>
    <dbReference type="NCBI Taxonomy" id="559292"/>
    <lineage>
        <taxon>Eukaryota</taxon>
        <taxon>Fungi</taxon>
        <taxon>Dikarya</taxon>
        <taxon>Ascomycota</taxon>
        <taxon>Saccharomycotina</taxon>
        <taxon>Saccharomycetes</taxon>
        <taxon>Saccharomycetales</taxon>
        <taxon>Saccharomycetaceae</taxon>
        <taxon>Saccharomyces</taxon>
    </lineage>
</organism>
<reference key="1">
    <citation type="journal article" date="1997" name="Nature">
        <title>The nucleotide sequence of Saccharomyces cerevisiae chromosome XIII.</title>
        <authorList>
            <person name="Bowman S."/>
            <person name="Churcher C.M."/>
            <person name="Badcock K."/>
            <person name="Brown D."/>
            <person name="Chillingworth T."/>
            <person name="Connor R."/>
            <person name="Dedman K."/>
            <person name="Devlin K."/>
            <person name="Gentles S."/>
            <person name="Hamlin N."/>
            <person name="Hunt S."/>
            <person name="Jagels K."/>
            <person name="Lye G."/>
            <person name="Moule S."/>
            <person name="Odell C."/>
            <person name="Pearson D."/>
            <person name="Rajandream M.A."/>
            <person name="Rice P."/>
            <person name="Skelton J."/>
            <person name="Walsh S.V."/>
            <person name="Whitehead S."/>
            <person name="Barrell B.G."/>
        </authorList>
    </citation>
    <scope>NUCLEOTIDE SEQUENCE [LARGE SCALE GENOMIC DNA]</scope>
    <source>
        <strain>ATCC 204508 / S288c</strain>
    </source>
</reference>
<reference key="2">
    <citation type="journal article" date="2014" name="G3 (Bethesda)">
        <title>The reference genome sequence of Saccharomyces cerevisiae: Then and now.</title>
        <authorList>
            <person name="Engel S.R."/>
            <person name="Dietrich F.S."/>
            <person name="Fisk D.G."/>
            <person name="Binkley G."/>
            <person name="Balakrishnan R."/>
            <person name="Costanzo M.C."/>
            <person name="Dwight S.S."/>
            <person name="Hitz B.C."/>
            <person name="Karra K."/>
            <person name="Nash R.S."/>
            <person name="Weng S."/>
            <person name="Wong E.D."/>
            <person name="Lloyd P."/>
            <person name="Skrzypek M.S."/>
            <person name="Miyasato S.R."/>
            <person name="Simison M."/>
            <person name="Cherry J.M."/>
        </authorList>
    </citation>
    <scope>GENOME REANNOTATION</scope>
    <source>
        <strain>ATCC 204508 / S288c</strain>
    </source>
</reference>
<reference key="3">
    <citation type="journal article" date="2003" name="Nature">
        <title>Global analysis of protein expression in yeast.</title>
        <authorList>
            <person name="Ghaemmaghami S."/>
            <person name="Huh W.-K."/>
            <person name="Bower K."/>
            <person name="Howson R.W."/>
            <person name="Belle A."/>
            <person name="Dephoure N."/>
            <person name="O'Shea E.K."/>
            <person name="Weissman J.S."/>
        </authorList>
    </citation>
    <scope>LEVEL OF PROTEIN EXPRESSION [LARGE SCALE ANALYSIS]</scope>
</reference>
<reference key="4">
    <citation type="journal article" date="2004" name="Yeast">
        <title>Large-scale screening of yeast mutants for sensitivity to the IMP dehydrogenase inhibitor 6-azauracil.</title>
        <authorList>
            <person name="Riles L."/>
            <person name="Shaw R.J."/>
            <person name="Johnston M."/>
            <person name="Reines D."/>
        </authorList>
    </citation>
    <scope>DISRUPTION PHENOTYPE</scope>
</reference>
<reference key="5">
    <citation type="journal article" date="2006" name="Proc. Natl. Acad. Sci. U.S.A.">
        <title>A global topology map of the Saccharomyces cerevisiae membrane proteome.</title>
        <authorList>
            <person name="Kim H."/>
            <person name="Melen K."/>
            <person name="Oesterberg M."/>
            <person name="von Heijne G."/>
        </authorList>
    </citation>
    <scope>TOPOLOGY [LARGE SCALE ANALYSIS]</scope>
    <source>
        <strain>ATCC 208353 / W303-1A</strain>
    </source>
</reference>
<reference key="6">
    <citation type="journal article" date="2007" name="J. Mol. Biol.">
        <title>Characteristics affecting expression and solubilization of yeast membrane proteins.</title>
        <authorList>
            <person name="White M.A."/>
            <person name="Clark K.M."/>
            <person name="Grayhack E.J."/>
            <person name="Dumont M.E."/>
        </authorList>
    </citation>
    <scope>SUBCELLULAR LOCATION</scope>
</reference>
<reference key="7">
    <citation type="journal article" date="2008" name="Genetics">
        <title>Global screening of genes essential for growth in high-pressure and cold environments: searching for basic adaptive strategies using a yeast deletion library.</title>
        <authorList>
            <person name="Abe F."/>
            <person name="Minegishi H."/>
        </authorList>
    </citation>
    <scope>FUNCTION</scope>
</reference>
<reference key="8">
    <citation type="journal article" date="2008" name="Mol. Cell. Proteomics">
        <title>A multidimensional chromatography technology for in-depth phosphoproteome analysis.</title>
        <authorList>
            <person name="Albuquerque C.P."/>
            <person name="Smolka M.B."/>
            <person name="Payne S.H."/>
            <person name="Bafna V."/>
            <person name="Eng J."/>
            <person name="Zhou H."/>
        </authorList>
    </citation>
    <scope>IDENTIFICATION BY MASS SPECTROMETRY [LARGE SCALE ANALYSIS]</scope>
</reference>
<accession>Q04216</accession>
<accession>D6VZU9</accession>
<gene>
    <name type="primary">DLT1</name>
    <name type="ordered locus">YMR126C</name>
    <name type="ORF">YM9553.02C</name>
</gene>
<sequence>MSGFAKLKSWLYKASLFVSLILLIGFSVVLPIDSIAQASKSENNAFNTFIVVGALVVFGVFCIFIIIGRMLFHKSCLKDIPRRYIPITPADLPHRSSREAVLQNMERSKELTILLKKPKDPVIHDGLEPPRRCDYPLDEKLFPEYLNYADCIKSLTDRLKYHGLFLNNLDVRMNLEDTFADVVNSQFVNHNANKIQLEKAKEFIDLYETIRFSGKDVTRDQFIKFVKFCLYFGEVSLTRDTSFANLHNFRLNGSSNNIGRTESKYSINPFDENEYAQDDMHYFPEPPTHLVRESSISTVARHVSSGVDLTNSEEHPLDTDSDCNALRLKLSKADSYRSVIRH</sequence>
<dbReference type="EMBL" id="Z48622">
    <property type="protein sequence ID" value="CAA88551.1"/>
    <property type="molecule type" value="Genomic_DNA"/>
</dbReference>
<dbReference type="EMBL" id="BK006946">
    <property type="protein sequence ID" value="DAA10023.1"/>
    <property type="molecule type" value="Genomic_DNA"/>
</dbReference>
<dbReference type="PIR" id="S53056">
    <property type="entry name" value="S53056"/>
</dbReference>
<dbReference type="RefSeq" id="NP_013845.1">
    <property type="nucleotide sequence ID" value="NM_001182627.1"/>
</dbReference>
<dbReference type="BioGRID" id="35303">
    <property type="interactions" value="118"/>
</dbReference>
<dbReference type="FunCoup" id="Q04216">
    <property type="interactions" value="27"/>
</dbReference>
<dbReference type="IntAct" id="Q04216">
    <property type="interactions" value="1"/>
</dbReference>
<dbReference type="STRING" id="4932.YMR126C"/>
<dbReference type="GlyGen" id="Q04216">
    <property type="glycosylation" value="1 site"/>
</dbReference>
<dbReference type="iPTMnet" id="Q04216"/>
<dbReference type="PaxDb" id="4932-YMR126C"/>
<dbReference type="PeptideAtlas" id="Q04216"/>
<dbReference type="EnsemblFungi" id="YMR126C_mRNA">
    <property type="protein sequence ID" value="YMR126C"/>
    <property type="gene ID" value="YMR126C"/>
</dbReference>
<dbReference type="GeneID" id="855156"/>
<dbReference type="KEGG" id="sce:YMR126C"/>
<dbReference type="AGR" id="SGD:S000004733"/>
<dbReference type="SGD" id="S000004733">
    <property type="gene designation" value="DLT1"/>
</dbReference>
<dbReference type="VEuPathDB" id="FungiDB:YMR126C"/>
<dbReference type="eggNOG" id="ENOG502RAJJ">
    <property type="taxonomic scope" value="Eukaryota"/>
</dbReference>
<dbReference type="HOGENOM" id="CLU_066044_0_0_1"/>
<dbReference type="InParanoid" id="Q04216"/>
<dbReference type="OMA" id="ITHHEFE"/>
<dbReference type="OrthoDB" id="4096362at2759"/>
<dbReference type="BioCyc" id="YEAST:G3O-32819-MONOMER"/>
<dbReference type="BioGRID-ORCS" id="855156">
    <property type="hits" value="1 hit in 10 CRISPR screens"/>
</dbReference>
<dbReference type="PRO" id="PR:Q04216"/>
<dbReference type="Proteomes" id="UP000002311">
    <property type="component" value="Chromosome XIII"/>
</dbReference>
<dbReference type="RNAct" id="Q04216">
    <property type="molecule type" value="protein"/>
</dbReference>
<dbReference type="GO" id="GO:0016020">
    <property type="term" value="C:membrane"/>
    <property type="evidence" value="ECO:0007669"/>
    <property type="project" value="UniProtKB-SubCell"/>
</dbReference>
<dbReference type="InterPro" id="IPR038869">
    <property type="entry name" value="DLT1"/>
</dbReference>
<dbReference type="PANTHER" id="PTHR40021">
    <property type="entry name" value="DEFECT AT LOW TEMPERATURE PROTEIN 1"/>
    <property type="match status" value="1"/>
</dbReference>
<dbReference type="PANTHER" id="PTHR40021:SF1">
    <property type="entry name" value="DEFECT AT LOW TEMPERATURE PROTEIN 1"/>
    <property type="match status" value="1"/>
</dbReference>
<evidence type="ECO:0000255" key="1"/>
<evidence type="ECO:0000269" key="2">
    <source>
    </source>
</evidence>
<evidence type="ECO:0000269" key="3">
    <source>
    </source>
</evidence>
<evidence type="ECO:0000269" key="4">
    <source>
    </source>
</evidence>
<evidence type="ECO:0000269" key="5">
    <source>
    </source>
</evidence>
<evidence type="ECO:0000305" key="6"/>
<name>DLT1_YEAST</name>
<protein>
    <recommendedName>
        <fullName>Defect at low temperature protein 1</fullName>
    </recommendedName>
</protein>
<comment type="function">
    <text evidence="5">Required for growth under high-pressure and low-temperature conditions.</text>
</comment>
<comment type="subcellular location">
    <subcellularLocation>
        <location evidence="4">Membrane</location>
        <topology evidence="4">Multi-pass membrane protein</topology>
    </subcellularLocation>
</comment>
<comment type="disruption phenotype">
    <text evidence="3">Sensitivity to 6-azauracil (6AU) and mycophenolic acid (MPA).</text>
</comment>
<comment type="miscellaneous">
    <text evidence="2">Present with 1200 molecules/cell in log phase SD medium.</text>
</comment>
<comment type="similarity">
    <text evidence="6">Belongs to the DLT1 family.</text>
</comment>
<proteinExistence type="evidence at protein level"/>